<gene>
    <name evidence="6" type="primary">MRX3</name>
    <name evidence="8" type="ordered locus">YBL095W</name>
    <name type="ORF">YBL0835</name>
</gene>
<dbReference type="EMBL" id="X79489">
    <property type="protein sequence ID" value="CAA56007.1"/>
    <property type="molecule type" value="Genomic_DNA"/>
</dbReference>
<dbReference type="EMBL" id="Z35857">
    <property type="protein sequence ID" value="CAA84917.1"/>
    <property type="molecule type" value="Genomic_DNA"/>
</dbReference>
<dbReference type="EMBL" id="AY558565">
    <property type="protein sequence ID" value="AAS56891.1"/>
    <property type="molecule type" value="Genomic_DNA"/>
</dbReference>
<dbReference type="EMBL" id="BK006936">
    <property type="protein sequence ID" value="DAA07029.1"/>
    <property type="molecule type" value="Genomic_DNA"/>
</dbReference>
<dbReference type="PIR" id="S45407">
    <property type="entry name" value="S45407"/>
</dbReference>
<dbReference type="RefSeq" id="NP_009457.1">
    <property type="nucleotide sequence ID" value="NM_001178335.1"/>
</dbReference>
<dbReference type="SMR" id="P38172"/>
<dbReference type="BioGRID" id="32609">
    <property type="interactions" value="74"/>
</dbReference>
<dbReference type="DIP" id="DIP-4588N"/>
<dbReference type="FunCoup" id="P38172">
    <property type="interactions" value="36"/>
</dbReference>
<dbReference type="IntAct" id="P38172">
    <property type="interactions" value="2"/>
</dbReference>
<dbReference type="STRING" id="4932.YBL095W"/>
<dbReference type="GlyGen" id="P38172">
    <property type="glycosylation" value="1 site"/>
</dbReference>
<dbReference type="PaxDb" id="4932-YBL095W"/>
<dbReference type="PeptideAtlas" id="P38172"/>
<dbReference type="EnsemblFungi" id="YBL095W_mRNA">
    <property type="protein sequence ID" value="YBL095W"/>
    <property type="gene ID" value="YBL095W"/>
</dbReference>
<dbReference type="GeneID" id="852181"/>
<dbReference type="KEGG" id="sce:YBL095W"/>
<dbReference type="AGR" id="SGD:S000000191"/>
<dbReference type="SGD" id="S000000191">
    <property type="gene designation" value="MRX3"/>
</dbReference>
<dbReference type="VEuPathDB" id="FungiDB:YBL095W"/>
<dbReference type="eggNOG" id="KOG4781">
    <property type="taxonomic scope" value="Eukaryota"/>
</dbReference>
<dbReference type="HOGENOM" id="CLU_052827_2_2_1"/>
<dbReference type="InParanoid" id="P38172"/>
<dbReference type="OMA" id="GRKCIIT"/>
<dbReference type="OrthoDB" id="506431at2759"/>
<dbReference type="BioCyc" id="YEAST:G3O-28982-MONOMER"/>
<dbReference type="BioGRID-ORCS" id="852181">
    <property type="hits" value="2 hits in 10 CRISPR screens"/>
</dbReference>
<dbReference type="PRO" id="PR:P38172"/>
<dbReference type="Proteomes" id="UP000002311">
    <property type="component" value="Chromosome II"/>
</dbReference>
<dbReference type="RNAct" id="P38172">
    <property type="molecule type" value="protein"/>
</dbReference>
<dbReference type="GO" id="GO:0005743">
    <property type="term" value="C:mitochondrial inner membrane"/>
    <property type="evidence" value="ECO:0000314"/>
    <property type="project" value="SGD"/>
</dbReference>
<dbReference type="GO" id="GO:0005739">
    <property type="term" value="C:mitochondrion"/>
    <property type="evidence" value="ECO:0007005"/>
    <property type="project" value="SGD"/>
</dbReference>
<dbReference type="Gene3D" id="3.10.129.10">
    <property type="entry name" value="Hotdog Thioesterase"/>
    <property type="match status" value="1"/>
</dbReference>
<dbReference type="InterPro" id="IPR029069">
    <property type="entry name" value="HotDog_dom_sf"/>
</dbReference>
<dbReference type="InterPro" id="IPR052061">
    <property type="entry name" value="PTE-AB_protein"/>
</dbReference>
<dbReference type="InterPro" id="IPR006683">
    <property type="entry name" value="Thioestr_dom"/>
</dbReference>
<dbReference type="PANTHER" id="PTHR47260:SF4">
    <property type="entry name" value="MIOREX COMPLEX COMPONENT 3"/>
    <property type="match status" value="1"/>
</dbReference>
<dbReference type="PANTHER" id="PTHR47260">
    <property type="entry name" value="UPF0644 PROTEIN PB2B4.06"/>
    <property type="match status" value="1"/>
</dbReference>
<dbReference type="Pfam" id="PF03061">
    <property type="entry name" value="4HBT"/>
    <property type="match status" value="1"/>
</dbReference>
<dbReference type="SUPFAM" id="SSF54637">
    <property type="entry name" value="Thioesterase/thiol ester dehydrase-isomerase"/>
    <property type="match status" value="1"/>
</dbReference>
<proteinExistence type="evidence at protein level"/>
<sequence length="270" mass="30545">MSRTIPFLFKLVNRAVILPTAGFTLGVGAFVKAWPDDAGVLSLNDPQTPAELISATKSRQPMELQRVDILAQIEKSEVYNKLAQDEKMHHVLFSEKIPSGHREYHVGQGLLFGKGKLEIDPLVFHDVNHGELTVIYHLGAELGNRDGNVHKGLLSLLLDEALCYCGFPLLPSKRGVTARLSLEFFEDIPVDTTIILKANVKEIKGRKCIIEGHLEQFPLEVSSRNGTRSWNLPHIWGFNHKQEMAKKFAKANCILVEPTWFKYFKWLDMF</sequence>
<organism>
    <name type="scientific">Saccharomyces cerevisiae (strain ATCC 204508 / S288c)</name>
    <name type="common">Baker's yeast</name>
    <dbReference type="NCBI Taxonomy" id="559292"/>
    <lineage>
        <taxon>Eukaryota</taxon>
        <taxon>Fungi</taxon>
        <taxon>Dikarya</taxon>
        <taxon>Ascomycota</taxon>
        <taxon>Saccharomycotina</taxon>
        <taxon>Saccharomycetes</taxon>
        <taxon>Saccharomycetales</taxon>
        <taxon>Saccharomycetaceae</taxon>
        <taxon>Saccharomyces</taxon>
    </lineage>
</organism>
<accession>P38172</accession>
<accession>D6VPQ9</accession>
<feature type="transit peptide" description="Mitochondrion" evidence="1">
    <location>
        <begin position="1"/>
        <end position="12"/>
    </location>
</feature>
<feature type="chain" id="PRO_0000202441" description="MIOREX complex component 3">
    <location>
        <begin position="13"/>
        <end position="270"/>
    </location>
</feature>
<protein>
    <recommendedName>
        <fullName evidence="7">MIOREX complex component 3</fullName>
    </recommendedName>
    <alternativeName>
        <fullName evidence="6">Mitochondrial organization of gene expression protein 3</fullName>
    </alternativeName>
</protein>
<keyword id="KW-0496">Mitochondrion</keyword>
<keyword id="KW-1185">Reference proteome</keyword>
<keyword id="KW-0809">Transit peptide</keyword>
<reference key="1">
    <citation type="journal article" date="1995" name="Yeast">
        <title>Sequence analysis of a 78.6 kb segment of the left end of Saccharomyces cerevisiae chromosome II.</title>
        <authorList>
            <person name="Obermaier B."/>
            <person name="Gassenhuber J."/>
            <person name="Piravandi E."/>
            <person name="Domdey H."/>
        </authorList>
    </citation>
    <scope>NUCLEOTIDE SEQUENCE [GENOMIC DNA]</scope>
    <source>
        <strain>ATCC 204508 / S288c</strain>
    </source>
</reference>
<reference key="2">
    <citation type="journal article" date="1994" name="EMBO J.">
        <title>Complete DNA sequence of yeast chromosome II.</title>
        <authorList>
            <person name="Feldmann H."/>
            <person name="Aigle M."/>
            <person name="Aljinovic G."/>
            <person name="Andre B."/>
            <person name="Baclet M.C."/>
            <person name="Barthe C."/>
            <person name="Baur A."/>
            <person name="Becam A.-M."/>
            <person name="Biteau N."/>
            <person name="Boles E."/>
            <person name="Brandt T."/>
            <person name="Brendel M."/>
            <person name="Brueckner M."/>
            <person name="Bussereau F."/>
            <person name="Christiansen C."/>
            <person name="Contreras R."/>
            <person name="Crouzet M."/>
            <person name="Cziepluch C."/>
            <person name="Demolis N."/>
            <person name="Delaveau T."/>
            <person name="Doignon F."/>
            <person name="Domdey H."/>
            <person name="Duesterhus S."/>
            <person name="Dubois E."/>
            <person name="Dujon B."/>
            <person name="El Bakkoury M."/>
            <person name="Entian K.-D."/>
            <person name="Feuermann M."/>
            <person name="Fiers W."/>
            <person name="Fobo G.M."/>
            <person name="Fritz C."/>
            <person name="Gassenhuber J."/>
            <person name="Glansdorff N."/>
            <person name="Goffeau A."/>
            <person name="Grivell L.A."/>
            <person name="de Haan M."/>
            <person name="Hein C."/>
            <person name="Herbert C.J."/>
            <person name="Hollenberg C.P."/>
            <person name="Holmstroem K."/>
            <person name="Jacq C."/>
            <person name="Jacquet M."/>
            <person name="Jauniaux J.-C."/>
            <person name="Jonniaux J.-L."/>
            <person name="Kallesoee T."/>
            <person name="Kiesau P."/>
            <person name="Kirchrath L."/>
            <person name="Koetter P."/>
            <person name="Korol S."/>
            <person name="Liebl S."/>
            <person name="Logghe M."/>
            <person name="Lohan A.J.E."/>
            <person name="Louis E.J."/>
            <person name="Li Z.Y."/>
            <person name="Maat M.J."/>
            <person name="Mallet L."/>
            <person name="Mannhaupt G."/>
            <person name="Messenguy F."/>
            <person name="Miosga T."/>
            <person name="Molemans F."/>
            <person name="Mueller S."/>
            <person name="Nasr F."/>
            <person name="Obermaier B."/>
            <person name="Perea J."/>
            <person name="Pierard A."/>
            <person name="Piravandi E."/>
            <person name="Pohl F.M."/>
            <person name="Pohl T.M."/>
            <person name="Potier S."/>
            <person name="Proft M."/>
            <person name="Purnelle B."/>
            <person name="Ramezani Rad M."/>
            <person name="Rieger M."/>
            <person name="Rose M."/>
            <person name="Schaaff-Gerstenschlaeger I."/>
            <person name="Scherens B."/>
            <person name="Schwarzlose C."/>
            <person name="Skala J."/>
            <person name="Slonimski P.P."/>
            <person name="Smits P.H.M."/>
            <person name="Souciet J.-L."/>
            <person name="Steensma H.Y."/>
            <person name="Stucka R."/>
            <person name="Urrestarazu L.A."/>
            <person name="van der Aart Q.J.M."/>
            <person name="Van Dyck L."/>
            <person name="Vassarotti A."/>
            <person name="Vetter I."/>
            <person name="Vierendeels F."/>
            <person name="Vissers S."/>
            <person name="Wagner G."/>
            <person name="de Wergifosse P."/>
            <person name="Wolfe K.H."/>
            <person name="Zagulski M."/>
            <person name="Zimmermann F.K."/>
            <person name="Mewes H.-W."/>
            <person name="Kleine K."/>
        </authorList>
    </citation>
    <scope>NUCLEOTIDE SEQUENCE [LARGE SCALE GENOMIC DNA]</scope>
    <source>
        <strain>ATCC 204508 / S288c</strain>
    </source>
</reference>
<reference key="3">
    <citation type="journal article" date="2014" name="G3 (Bethesda)">
        <title>The reference genome sequence of Saccharomyces cerevisiae: Then and now.</title>
        <authorList>
            <person name="Engel S.R."/>
            <person name="Dietrich F.S."/>
            <person name="Fisk D.G."/>
            <person name="Binkley G."/>
            <person name="Balakrishnan R."/>
            <person name="Costanzo M.C."/>
            <person name="Dwight S.S."/>
            <person name="Hitz B.C."/>
            <person name="Karra K."/>
            <person name="Nash R.S."/>
            <person name="Weng S."/>
            <person name="Wong E.D."/>
            <person name="Lloyd P."/>
            <person name="Skrzypek M.S."/>
            <person name="Miyasato S.R."/>
            <person name="Simison M."/>
            <person name="Cherry J.M."/>
        </authorList>
    </citation>
    <scope>GENOME REANNOTATION</scope>
    <source>
        <strain>ATCC 204508 / S288c</strain>
    </source>
</reference>
<reference key="4">
    <citation type="journal article" date="2007" name="Genome Res.">
        <title>Approaching a complete repository of sequence-verified protein-encoding clones for Saccharomyces cerevisiae.</title>
        <authorList>
            <person name="Hu Y."/>
            <person name="Rolfs A."/>
            <person name="Bhullar B."/>
            <person name="Murthy T.V.S."/>
            <person name="Zhu C."/>
            <person name="Berger M.F."/>
            <person name="Camargo A.A."/>
            <person name="Kelley F."/>
            <person name="McCarron S."/>
            <person name="Jepson D."/>
            <person name="Richardson A."/>
            <person name="Raphael J."/>
            <person name="Moreira D."/>
            <person name="Taycher E."/>
            <person name="Zuo D."/>
            <person name="Mohr S."/>
            <person name="Kane M.F."/>
            <person name="Williamson J."/>
            <person name="Simpson A.J.G."/>
            <person name="Bulyk M.L."/>
            <person name="Harlow E."/>
            <person name="Marsischky G."/>
            <person name="Kolodner R.D."/>
            <person name="LaBaer J."/>
        </authorList>
    </citation>
    <scope>NUCLEOTIDE SEQUENCE [GENOMIC DNA]</scope>
    <source>
        <strain>ATCC 204508 / S288c</strain>
    </source>
</reference>
<reference key="5">
    <citation type="journal article" date="2003" name="Nature">
        <title>Global analysis of protein localization in budding yeast.</title>
        <authorList>
            <person name="Huh W.-K."/>
            <person name="Falvo J.V."/>
            <person name="Gerke L.C."/>
            <person name="Carroll A.S."/>
            <person name="Howson R.W."/>
            <person name="Weissman J.S."/>
            <person name="O'Shea E.K."/>
        </authorList>
    </citation>
    <scope>SUBCELLULAR LOCATION [LARGE SCALE ANALYSIS]</scope>
</reference>
<reference key="6">
    <citation type="journal article" date="2003" name="Nature">
        <title>Global analysis of protein expression in yeast.</title>
        <authorList>
            <person name="Ghaemmaghami S."/>
            <person name="Huh W.-K."/>
            <person name="Bower K."/>
            <person name="Howson R.W."/>
            <person name="Belle A."/>
            <person name="Dephoure N."/>
            <person name="O'Shea E.K."/>
            <person name="Weissman J.S."/>
        </authorList>
    </citation>
    <scope>LEVEL OF PROTEIN EXPRESSION [LARGE SCALE ANALYSIS]</scope>
</reference>
<reference key="7">
    <citation type="journal article" date="2006" name="J. Proteome Res.">
        <title>Toward the complete yeast mitochondrial proteome: multidimensional separation techniques for mitochondrial proteomics.</title>
        <authorList>
            <person name="Reinders J."/>
            <person name="Zahedi R.P."/>
            <person name="Pfanner N."/>
            <person name="Meisinger C."/>
            <person name="Sickmann A."/>
        </authorList>
    </citation>
    <scope>SUBCELLULAR LOCATION [LARGE SCALE ANALYSIS]</scope>
    <scope>IDENTIFICATION BY MASS SPECTROMETRY</scope>
</reference>
<reference key="8">
    <citation type="journal article" date="2015" name="Cell Rep.">
        <title>Organization of mitochondrial gene expression in two distinct ribosome-containing assemblies.</title>
        <authorList>
            <person name="Kehrein K."/>
            <person name="Schilling R."/>
            <person name="Moller-Hergt B.V."/>
            <person name="Wurm C.A."/>
            <person name="Jakobs S."/>
            <person name="Lamkemeyer T."/>
            <person name="Langer T."/>
            <person name="Ott M."/>
        </authorList>
    </citation>
    <scope>FUNCTION</scope>
    <scope>SUBUNIT</scope>
</reference>
<name>MRX3_YEAST</name>
<comment type="function">
    <text evidence="5">Component of MIOREX complexes, large expressome-like assemblies of ribosomes with factors involved in all the steps of post-transcriptional gene expression.</text>
</comment>
<comment type="subunit">
    <text evidence="5">Associates with the mitochondrial ribosome.</text>
</comment>
<comment type="subcellular location">
    <subcellularLocation>
        <location evidence="2 4">Mitochondrion</location>
    </subcellularLocation>
</comment>
<comment type="miscellaneous">
    <text evidence="3">Present with 704 molecules/cell in log phase SD medium.</text>
</comment>
<evidence type="ECO:0000255" key="1"/>
<evidence type="ECO:0000269" key="2">
    <source>
    </source>
</evidence>
<evidence type="ECO:0000269" key="3">
    <source>
    </source>
</evidence>
<evidence type="ECO:0000269" key="4">
    <source>
    </source>
</evidence>
<evidence type="ECO:0000269" key="5">
    <source>
    </source>
</evidence>
<evidence type="ECO:0000303" key="6">
    <source>
    </source>
</evidence>
<evidence type="ECO:0000305" key="7">
    <source>
    </source>
</evidence>
<evidence type="ECO:0000312" key="8">
    <source>
        <dbReference type="SGD" id="S000000191"/>
    </source>
</evidence>